<dbReference type="EC" id="3.4.11.1" evidence="1"/>
<dbReference type="EC" id="3.4.11.10" evidence="1"/>
<dbReference type="EMBL" id="CP001001">
    <property type="protein sequence ID" value="ACB22568.1"/>
    <property type="molecule type" value="Genomic_DNA"/>
</dbReference>
<dbReference type="RefSeq" id="WP_012317564.1">
    <property type="nucleotide sequence ID" value="NC_010505.1"/>
</dbReference>
<dbReference type="SMR" id="B1LVC3"/>
<dbReference type="STRING" id="426355.Mrad2831_0557"/>
<dbReference type="GeneID" id="6136570"/>
<dbReference type="KEGG" id="mrd:Mrad2831_0557"/>
<dbReference type="PATRIC" id="fig|426355.14.peg.584"/>
<dbReference type="eggNOG" id="COG0260">
    <property type="taxonomic scope" value="Bacteria"/>
</dbReference>
<dbReference type="HOGENOM" id="CLU_013734_6_0_5"/>
<dbReference type="OrthoDB" id="9809354at2"/>
<dbReference type="Proteomes" id="UP000006589">
    <property type="component" value="Chromosome"/>
</dbReference>
<dbReference type="GO" id="GO:0005737">
    <property type="term" value="C:cytoplasm"/>
    <property type="evidence" value="ECO:0007669"/>
    <property type="project" value="UniProtKB-SubCell"/>
</dbReference>
<dbReference type="GO" id="GO:0030145">
    <property type="term" value="F:manganese ion binding"/>
    <property type="evidence" value="ECO:0007669"/>
    <property type="project" value="UniProtKB-UniRule"/>
</dbReference>
<dbReference type="GO" id="GO:0070006">
    <property type="term" value="F:metalloaminopeptidase activity"/>
    <property type="evidence" value="ECO:0007669"/>
    <property type="project" value="InterPro"/>
</dbReference>
<dbReference type="GO" id="GO:0006508">
    <property type="term" value="P:proteolysis"/>
    <property type="evidence" value="ECO:0007669"/>
    <property type="project" value="UniProtKB-KW"/>
</dbReference>
<dbReference type="CDD" id="cd00433">
    <property type="entry name" value="Peptidase_M17"/>
    <property type="match status" value="1"/>
</dbReference>
<dbReference type="Gene3D" id="3.40.220.10">
    <property type="entry name" value="Leucine Aminopeptidase, subunit E, domain 1"/>
    <property type="match status" value="1"/>
</dbReference>
<dbReference type="Gene3D" id="3.40.630.10">
    <property type="entry name" value="Zn peptidases"/>
    <property type="match status" value="1"/>
</dbReference>
<dbReference type="HAMAP" id="MF_00181">
    <property type="entry name" value="Cytosol_peptidase_M17"/>
    <property type="match status" value="1"/>
</dbReference>
<dbReference type="InterPro" id="IPR011356">
    <property type="entry name" value="Leucine_aapep/pepB"/>
</dbReference>
<dbReference type="InterPro" id="IPR043472">
    <property type="entry name" value="Macro_dom-like"/>
</dbReference>
<dbReference type="InterPro" id="IPR000819">
    <property type="entry name" value="Peptidase_M17_C"/>
</dbReference>
<dbReference type="InterPro" id="IPR023042">
    <property type="entry name" value="Peptidase_M17_leu_NH2_pept"/>
</dbReference>
<dbReference type="InterPro" id="IPR008283">
    <property type="entry name" value="Peptidase_M17_N"/>
</dbReference>
<dbReference type="NCBIfam" id="NF002073">
    <property type="entry name" value="PRK00913.1-2"/>
    <property type="match status" value="1"/>
</dbReference>
<dbReference type="NCBIfam" id="NF002074">
    <property type="entry name" value="PRK00913.1-4"/>
    <property type="match status" value="1"/>
</dbReference>
<dbReference type="NCBIfam" id="NF002075">
    <property type="entry name" value="PRK00913.2-2"/>
    <property type="match status" value="1"/>
</dbReference>
<dbReference type="NCBIfam" id="NF002077">
    <property type="entry name" value="PRK00913.2-4"/>
    <property type="match status" value="1"/>
</dbReference>
<dbReference type="PANTHER" id="PTHR11963:SF23">
    <property type="entry name" value="CYTOSOL AMINOPEPTIDASE"/>
    <property type="match status" value="1"/>
</dbReference>
<dbReference type="PANTHER" id="PTHR11963">
    <property type="entry name" value="LEUCINE AMINOPEPTIDASE-RELATED"/>
    <property type="match status" value="1"/>
</dbReference>
<dbReference type="Pfam" id="PF00883">
    <property type="entry name" value="Peptidase_M17"/>
    <property type="match status" value="1"/>
</dbReference>
<dbReference type="Pfam" id="PF02789">
    <property type="entry name" value="Peptidase_M17_N"/>
    <property type="match status" value="1"/>
</dbReference>
<dbReference type="PRINTS" id="PR00481">
    <property type="entry name" value="LAMNOPPTDASE"/>
</dbReference>
<dbReference type="SUPFAM" id="SSF52949">
    <property type="entry name" value="Macro domain-like"/>
    <property type="match status" value="1"/>
</dbReference>
<dbReference type="SUPFAM" id="SSF53187">
    <property type="entry name" value="Zn-dependent exopeptidases"/>
    <property type="match status" value="1"/>
</dbReference>
<dbReference type="PROSITE" id="PS00631">
    <property type="entry name" value="CYTOSOL_AP"/>
    <property type="match status" value="1"/>
</dbReference>
<reference key="1">
    <citation type="submission" date="2008-03" db="EMBL/GenBank/DDBJ databases">
        <title>Complete sequence of chromosome of Methylobacterium radiotolerans JCM 2831.</title>
        <authorList>
            <consortium name="US DOE Joint Genome Institute"/>
            <person name="Copeland A."/>
            <person name="Lucas S."/>
            <person name="Lapidus A."/>
            <person name="Glavina del Rio T."/>
            <person name="Dalin E."/>
            <person name="Tice H."/>
            <person name="Bruce D."/>
            <person name="Goodwin L."/>
            <person name="Pitluck S."/>
            <person name="Kiss H."/>
            <person name="Brettin T."/>
            <person name="Detter J.C."/>
            <person name="Han C."/>
            <person name="Kuske C.R."/>
            <person name="Schmutz J."/>
            <person name="Larimer F."/>
            <person name="Land M."/>
            <person name="Hauser L."/>
            <person name="Kyrpides N."/>
            <person name="Mikhailova N."/>
            <person name="Marx C.J."/>
            <person name="Richardson P."/>
        </authorList>
    </citation>
    <scope>NUCLEOTIDE SEQUENCE [LARGE SCALE GENOMIC DNA]</scope>
    <source>
        <strain>ATCC 27329 / DSM 1819 / JCM 2831 / NBRC 15690 / NCIMB 10815 / 0-1</strain>
    </source>
</reference>
<name>AMPA_METRJ</name>
<feature type="chain" id="PRO_1000098330" description="Probable cytosol aminopeptidase">
    <location>
        <begin position="1"/>
        <end position="503"/>
    </location>
</feature>
<feature type="active site" evidence="1">
    <location>
        <position position="280"/>
    </location>
</feature>
<feature type="active site" evidence="1">
    <location>
        <position position="354"/>
    </location>
</feature>
<feature type="binding site" evidence="1">
    <location>
        <position position="268"/>
    </location>
    <ligand>
        <name>Mn(2+)</name>
        <dbReference type="ChEBI" id="CHEBI:29035"/>
        <label>2</label>
    </ligand>
</feature>
<feature type="binding site" evidence="1">
    <location>
        <position position="273"/>
    </location>
    <ligand>
        <name>Mn(2+)</name>
        <dbReference type="ChEBI" id="CHEBI:29035"/>
        <label>1</label>
    </ligand>
</feature>
<feature type="binding site" evidence="1">
    <location>
        <position position="273"/>
    </location>
    <ligand>
        <name>Mn(2+)</name>
        <dbReference type="ChEBI" id="CHEBI:29035"/>
        <label>2</label>
    </ligand>
</feature>
<feature type="binding site" evidence="1">
    <location>
        <position position="291"/>
    </location>
    <ligand>
        <name>Mn(2+)</name>
        <dbReference type="ChEBI" id="CHEBI:29035"/>
        <label>2</label>
    </ligand>
</feature>
<feature type="binding site" evidence="1">
    <location>
        <position position="350"/>
    </location>
    <ligand>
        <name>Mn(2+)</name>
        <dbReference type="ChEBI" id="CHEBI:29035"/>
        <label>1</label>
    </ligand>
</feature>
<feature type="binding site" evidence="1">
    <location>
        <position position="352"/>
    </location>
    <ligand>
        <name>Mn(2+)</name>
        <dbReference type="ChEBI" id="CHEBI:29035"/>
        <label>1</label>
    </ligand>
</feature>
<feature type="binding site" evidence="1">
    <location>
        <position position="352"/>
    </location>
    <ligand>
        <name>Mn(2+)</name>
        <dbReference type="ChEBI" id="CHEBI:29035"/>
        <label>2</label>
    </ligand>
</feature>
<organism>
    <name type="scientific">Methylobacterium radiotolerans (strain ATCC 27329 / DSM 1819 / JCM 2831 / NBRC 15690 / NCIMB 10815 / 0-1)</name>
    <dbReference type="NCBI Taxonomy" id="426355"/>
    <lineage>
        <taxon>Bacteria</taxon>
        <taxon>Pseudomonadati</taxon>
        <taxon>Pseudomonadota</taxon>
        <taxon>Alphaproteobacteria</taxon>
        <taxon>Hyphomicrobiales</taxon>
        <taxon>Methylobacteriaceae</taxon>
        <taxon>Methylobacterium</taxon>
    </lineage>
</organism>
<keyword id="KW-0031">Aminopeptidase</keyword>
<keyword id="KW-0963">Cytoplasm</keyword>
<keyword id="KW-0378">Hydrolase</keyword>
<keyword id="KW-0464">Manganese</keyword>
<keyword id="KW-0479">Metal-binding</keyword>
<keyword id="KW-0645">Protease</keyword>
<sequence>MADGIEIGFGPLEQSGQGPGGSGDLVVFVGDDLSLGSAAREALGASGADLVARAAASEKFKGRSLSALSLPAPAGVGADRLVVVGLGSEKDRAKTDWPALGGFTASKVAGRTARVVLDWPGTTVTAAQAGEFALGARLRTYAFDRYKTKKKPDADDKSVTALTLLLADHGAAAREGEGARSLSDGVILARDLVNEPPNVLFPAEFARRASELAKLGVEIEVLEPARMRELGMGALLAVAQGSAREPRIVIMRWNGGPAAEAPVALIGKGVVFDSGGVSIKPGGGMEDMKGDMGGAAAVVGALHALAARKARCNVVGAIGIVENMPDGGAYRPSDILTSMSGQTIEVINTDAEGRLVLADVITHVIRSTKPKAIVDLATLTGAIIVALGQDIAGMFSNDDTLASNIHAAGEATGEKVWRMPLIPAYDKAIDSKFADMKNTGGRHGGAATAASFIKRYVEDVPWAHLDIAGVAMSSNASEINRSWGAGWGVRLLDRLIRDHYEAR</sequence>
<comment type="function">
    <text evidence="1">Presumably involved in the processing and regular turnover of intracellular proteins. Catalyzes the removal of unsubstituted N-terminal amino acids from various peptides.</text>
</comment>
<comment type="catalytic activity">
    <reaction evidence="1">
        <text>Release of an N-terminal amino acid, Xaa-|-Yaa-, in which Xaa is preferably Leu, but may be other amino acids including Pro although not Arg or Lys, and Yaa may be Pro. Amino acid amides and methyl esters are also readily hydrolyzed, but rates on arylamides are exceedingly low.</text>
        <dbReference type="EC" id="3.4.11.1"/>
    </reaction>
</comment>
<comment type="catalytic activity">
    <reaction evidence="1">
        <text>Release of an N-terminal amino acid, preferentially leucine, but not glutamic or aspartic acids.</text>
        <dbReference type="EC" id="3.4.11.10"/>
    </reaction>
</comment>
<comment type="cofactor">
    <cofactor evidence="1">
        <name>Mn(2+)</name>
        <dbReference type="ChEBI" id="CHEBI:29035"/>
    </cofactor>
    <text evidence="1">Binds 2 manganese ions per subunit.</text>
</comment>
<comment type="subcellular location">
    <subcellularLocation>
        <location evidence="1">Cytoplasm</location>
    </subcellularLocation>
</comment>
<comment type="similarity">
    <text evidence="1">Belongs to the peptidase M17 family.</text>
</comment>
<gene>
    <name evidence="1" type="primary">pepA</name>
    <name type="ordered locus">Mrad2831_0557</name>
</gene>
<accession>B1LVC3</accession>
<evidence type="ECO:0000255" key="1">
    <source>
        <dbReference type="HAMAP-Rule" id="MF_00181"/>
    </source>
</evidence>
<proteinExistence type="inferred from homology"/>
<protein>
    <recommendedName>
        <fullName evidence="1">Probable cytosol aminopeptidase</fullName>
        <ecNumber evidence="1">3.4.11.1</ecNumber>
    </recommendedName>
    <alternativeName>
        <fullName evidence="1">Leucine aminopeptidase</fullName>
        <shortName evidence="1">LAP</shortName>
        <ecNumber evidence="1">3.4.11.10</ecNumber>
    </alternativeName>
    <alternativeName>
        <fullName evidence="1">Leucyl aminopeptidase</fullName>
    </alternativeName>
</protein>